<keyword id="KW-1267">Proteomics identification</keyword>
<keyword id="KW-1185">Reference proteome</keyword>
<keyword id="KW-0856">Williams-Beuren syndrome</keyword>
<proteinExistence type="evidence at protein level"/>
<organism>
    <name type="scientific">Homo sapiens</name>
    <name type="common">Human</name>
    <dbReference type="NCBI Taxonomy" id="9606"/>
    <lineage>
        <taxon>Eukaryota</taxon>
        <taxon>Metazoa</taxon>
        <taxon>Chordata</taxon>
        <taxon>Craniata</taxon>
        <taxon>Vertebrata</taxon>
        <taxon>Euteleostomi</taxon>
        <taxon>Mammalia</taxon>
        <taxon>Eutheria</taxon>
        <taxon>Euarchontoglires</taxon>
        <taxon>Primates</taxon>
        <taxon>Haplorrhini</taxon>
        <taxon>Catarrhini</taxon>
        <taxon>Hominidae</taxon>
        <taxon>Homo</taxon>
    </lineage>
</organism>
<gene>
    <name evidence="5" type="primary">METTL27</name>
    <name evidence="5" type="synonym">WBSCR27</name>
</gene>
<name>MET27_HUMAN</name>
<evidence type="ECO:0000269" key="1">
    <source>
    </source>
</evidence>
<evidence type="ECO:0000269" key="2">
    <source>
    </source>
</evidence>
<evidence type="ECO:0000269" key="3">
    <source ref="1"/>
</evidence>
<evidence type="ECO:0000305" key="4"/>
<evidence type="ECO:0000312" key="5">
    <source>
        <dbReference type="HGNC" id="HGNC:19068"/>
    </source>
</evidence>
<comment type="interaction">
    <interactant intactId="EBI-8487781">
        <id>Q8N6F8</id>
    </interactant>
    <interactant intactId="EBI-2809489">
        <id>Q9NQ94</id>
        <label>A1CF</label>
    </interactant>
    <organismsDiffer>false</organismsDiffer>
    <experiments>3</experiments>
</comment>
<comment type="interaction">
    <interactant intactId="EBI-8487781">
        <id>Q8N6F8</id>
    </interactant>
    <interactant intactId="EBI-1044810">
        <id>P24539</id>
        <label>ATP5PB</label>
    </interactant>
    <organismsDiffer>false</organismsDiffer>
    <experiments>3</experiments>
</comment>
<comment type="interaction">
    <interactant intactId="EBI-8487781">
        <id>Q8N6F8</id>
    </interactant>
    <interactant intactId="EBI-930964">
        <id>P54253</id>
        <label>ATXN1</label>
    </interactant>
    <organismsDiffer>false</organismsDiffer>
    <experiments>9</experiments>
</comment>
<comment type="interaction">
    <interactant intactId="EBI-8487781">
        <id>Q8N6F8</id>
    </interactant>
    <interactant intactId="EBI-8624731">
        <id>P0C7T5</id>
        <label>ATXN1L</label>
    </interactant>
    <organismsDiffer>false</organismsDiffer>
    <experiments>3</experiments>
</comment>
<comment type="interaction">
    <interactant intactId="EBI-8487781">
        <id>Q8N6F8</id>
    </interactant>
    <interactant intactId="EBI-10988864">
        <id>P46379-2</id>
        <label>BAG6</label>
    </interactant>
    <organismsDiffer>false</organismsDiffer>
    <experiments>3</experiments>
</comment>
<comment type="interaction">
    <interactant intactId="EBI-8487781">
        <id>Q8N6F8</id>
    </interactant>
    <interactant intactId="EBI-744556">
        <id>Q96HB5</id>
        <label>CCDC120</label>
    </interactant>
    <organismsDiffer>false</organismsDiffer>
    <experiments>3</experiments>
</comment>
<comment type="interaction">
    <interactant intactId="EBI-8487781">
        <id>Q8N6F8</id>
    </interactant>
    <interactant intactId="EBI-711360">
        <id>P33240</id>
        <label>CSTF2</label>
    </interactant>
    <organismsDiffer>false</organismsDiffer>
    <experiments>3</experiments>
</comment>
<comment type="interaction">
    <interactant intactId="EBI-8487781">
        <id>Q8N6F8</id>
    </interactant>
    <interactant intactId="EBI-12593112">
        <id>O75190-2</id>
        <label>DNAJB6</label>
    </interactant>
    <organismsDiffer>false</organismsDiffer>
    <experiments>3</experiments>
</comment>
<comment type="interaction">
    <interactant intactId="EBI-8487781">
        <id>Q8N6F8</id>
    </interactant>
    <interactant intactId="EBI-395638">
        <id>O14645</id>
        <label>DNALI1</label>
    </interactant>
    <organismsDiffer>false</organismsDiffer>
    <experiments>3</experiments>
</comment>
<comment type="interaction">
    <interactant intactId="EBI-8487781">
        <id>Q8N6F8</id>
    </interactant>
    <interactant intactId="EBI-2880244">
        <id>Q6PKX4</id>
        <label>DOK6</label>
    </interactant>
    <organismsDiffer>false</organismsDiffer>
    <experiments>3</experiments>
</comment>
<comment type="interaction">
    <interactant intactId="EBI-8487781">
        <id>Q8N6F8</id>
    </interactant>
    <interactant intactId="EBI-743105">
        <id>Q5JVL4</id>
        <label>EFHC1</label>
    </interactant>
    <organismsDiffer>false</organismsDiffer>
    <experiments>3</experiments>
</comment>
<comment type="interaction">
    <interactant intactId="EBI-8487781">
        <id>Q8N6F8</id>
    </interactant>
    <interactant intactId="EBI-744099">
        <id>Q9H0I2</id>
        <label>ENKD1</label>
    </interactant>
    <organismsDiffer>false</organismsDiffer>
    <experiments>3</experiments>
</comment>
<comment type="interaction">
    <interactant intactId="EBI-8487781">
        <id>Q8N6F8</id>
    </interactant>
    <interactant intactId="EBI-3956892">
        <id>Q99958</id>
        <label>FOXC2</label>
    </interactant>
    <organismsDiffer>false</organismsDiffer>
    <experiments>3</experiments>
</comment>
<comment type="interaction">
    <interactant intactId="EBI-8487781">
        <id>Q8N6F8</id>
    </interactant>
    <interactant intactId="EBI-744302">
        <id>P14136</id>
        <label>GFAP</label>
    </interactant>
    <organismsDiffer>false</organismsDiffer>
    <experiments>3</experiments>
</comment>
<comment type="interaction">
    <interactant intactId="EBI-8487781">
        <id>Q8N6F8</id>
    </interactant>
    <interactant intactId="EBI-748515">
        <id>Q8IVS8</id>
        <label>GLYCTK</label>
    </interactant>
    <organismsDiffer>false</organismsDiffer>
    <experiments>3</experiments>
</comment>
<comment type="interaction">
    <interactant intactId="EBI-8487781">
        <id>Q8N6F8</id>
    </interactant>
    <interactant intactId="EBI-751540">
        <id>O95872</id>
        <label>GPANK1</label>
    </interactant>
    <organismsDiffer>false</organismsDiffer>
    <experiments>3</experiments>
</comment>
<comment type="interaction">
    <interactant intactId="EBI-8487781">
        <id>Q8N6F8</id>
    </interactant>
    <interactant intactId="EBI-740220">
        <id>O14964</id>
        <label>HGS</label>
    </interactant>
    <organismsDiffer>false</organismsDiffer>
    <experiments>3</experiments>
</comment>
<comment type="interaction">
    <interactant intactId="EBI-8487781">
        <id>Q8N6F8</id>
    </interactant>
    <interactant intactId="EBI-352682">
        <id>P04792</id>
        <label>HSPB1</label>
    </interactant>
    <organismsDiffer>false</organismsDiffer>
    <experiments>3</experiments>
</comment>
<comment type="interaction">
    <interactant intactId="EBI-8487781">
        <id>Q8N6F8</id>
    </interactant>
    <interactant intactId="EBI-466029">
        <id>P42858</id>
        <label>HTT</label>
    </interactant>
    <organismsDiffer>false</organismsDiffer>
    <experiments>9</experiments>
</comment>
<comment type="interaction">
    <interactant intactId="EBI-8487781">
        <id>Q8N6F8</id>
    </interactant>
    <interactant intactId="EBI-10975473">
        <id>O60333-2</id>
        <label>KIF1B</label>
    </interactant>
    <organismsDiffer>false</organismsDiffer>
    <experiments>3</experiments>
</comment>
<comment type="interaction">
    <interactant intactId="EBI-8487781">
        <id>Q8N6F8</id>
    </interactant>
    <interactant intactId="EBI-948266">
        <id>O14901</id>
        <label>KLF11</label>
    </interactant>
    <organismsDiffer>false</organismsDiffer>
    <experiments>3</experiments>
</comment>
<comment type="interaction">
    <interactant intactId="EBI-8487781">
        <id>Q8N6F8</id>
    </interactant>
    <interactant intactId="EBI-2798728">
        <id>P61968</id>
        <label>LMO4</label>
    </interactant>
    <organismsDiffer>false</organismsDiffer>
    <experiments>3</experiments>
</comment>
<comment type="interaction">
    <interactant intactId="EBI-8487781">
        <id>Q8N6F8</id>
    </interactant>
    <interactant intactId="EBI-4314821">
        <id>Q13449</id>
        <label>LSAMP</label>
    </interactant>
    <organismsDiffer>false</organismsDiffer>
    <experiments>3</experiments>
</comment>
<comment type="interaction">
    <interactant intactId="EBI-8487781">
        <id>Q8N6F8</id>
    </interactant>
    <interactant intactId="EBI-6190702">
        <id>P28331-2</id>
        <label>NDUFS1</label>
    </interactant>
    <organismsDiffer>false</organismsDiffer>
    <experiments>3</experiments>
</comment>
<comment type="interaction">
    <interactant intactId="EBI-8487781">
        <id>Q8N6F8</id>
    </interactant>
    <interactant intactId="EBI-713665">
        <id>P19404</id>
        <label>NDUFV2</label>
    </interactant>
    <organismsDiffer>false</organismsDiffer>
    <experiments>3</experiments>
</comment>
<comment type="interaction">
    <interactant intactId="EBI-8487781">
        <id>Q8N6F8</id>
    </interactant>
    <interactant intactId="EBI-1391623">
        <id>P29474</id>
        <label>NOS3</label>
    </interactant>
    <organismsDiffer>false</organismsDiffer>
    <experiments>3</experiments>
</comment>
<comment type="interaction">
    <interactant intactId="EBI-8487781">
        <id>Q8N6F8</id>
    </interactant>
    <interactant intactId="EBI-12025760">
        <id>Q86UR1-2</id>
        <label>NOXA1</label>
    </interactant>
    <organismsDiffer>false</organismsDiffer>
    <experiments>3</experiments>
</comment>
<comment type="interaction">
    <interactant intactId="EBI-8487781">
        <id>Q8N6F8</id>
    </interactant>
    <interactant intactId="EBI-2811583">
        <id>Q9BVL2</id>
        <label>NUP58</label>
    </interactant>
    <organismsDiffer>false</organismsDiffer>
    <experiments>3</experiments>
</comment>
<comment type="interaction">
    <interactant intactId="EBI-8487781">
        <id>Q8N6F8</id>
    </interactant>
    <interactant intactId="EBI-79893">
        <id>Q92569</id>
        <label>PIK3R3</label>
    </interactant>
    <organismsDiffer>false</organismsDiffer>
    <experiments>3</experiments>
</comment>
<comment type="interaction">
    <interactant intactId="EBI-8487781">
        <id>Q8N6F8</id>
    </interactant>
    <interactant intactId="EBI-748265">
        <id>P78337</id>
        <label>PITX1</label>
    </interactant>
    <organismsDiffer>false</organismsDiffer>
    <experiments>5</experiments>
</comment>
<comment type="interaction">
    <interactant intactId="EBI-8487781">
        <id>Q8N6F8</id>
    </interactant>
    <interactant intactId="EBI-1053424">
        <id>O43741</id>
        <label>PRKAB2</label>
    </interactant>
    <organismsDiffer>false</organismsDiffer>
    <experiments>3</experiments>
</comment>
<comment type="interaction">
    <interactant intactId="EBI-8487781">
        <id>Q8N6F8</id>
    </interactant>
    <interactant intactId="EBI-9027467">
        <id>O75360</id>
        <label>PROP1</label>
    </interactant>
    <organismsDiffer>false</organismsDiffer>
    <experiments>3</experiments>
</comment>
<comment type="interaction">
    <interactant intactId="EBI-8487781">
        <id>Q8N6F8</id>
    </interactant>
    <interactant intactId="EBI-749195">
        <id>P60891</id>
        <label>PRPS1</label>
    </interactant>
    <organismsDiffer>false</organismsDiffer>
    <experiments>3</experiments>
</comment>
<comment type="interaction">
    <interactant intactId="EBI-8487781">
        <id>Q8N6F8</id>
    </interactant>
    <interactant intactId="EBI-396669">
        <id>Q9Y3C5</id>
        <label>RNF11</label>
    </interactant>
    <organismsDiffer>false</organismsDiffer>
    <experiments>3</experiments>
</comment>
<comment type="interaction">
    <interactant intactId="EBI-8487781">
        <id>Q8N6F8</id>
    </interactant>
    <interactant intactId="EBI-12000762">
        <id>Q7Z5V6-2</id>
        <label>SAXO4</label>
    </interactant>
    <organismsDiffer>false</organismsDiffer>
    <experiments>3</experiments>
</comment>
<comment type="interaction">
    <interactant intactId="EBI-8487781">
        <id>Q8N6F8</id>
    </interactant>
    <interactant intactId="EBI-985879">
        <id>P37840</id>
        <label>SNCA</label>
    </interactant>
    <organismsDiffer>false</organismsDiffer>
    <experiments>3</experiments>
</comment>
<comment type="interaction">
    <interactant intactId="EBI-8487781">
        <id>Q8N6F8</id>
    </interactant>
    <interactant intactId="EBI-372475">
        <id>P14678-2</id>
        <label>SNRPB</label>
    </interactant>
    <organismsDiffer>false</organismsDiffer>
    <experiments>3</experiments>
</comment>
<comment type="interaction">
    <interactant intactId="EBI-8487781">
        <id>Q8N6F8</id>
    </interactant>
    <interactant intactId="EBI-766589">
        <id>P09234</id>
        <label>SNRPC</label>
    </interactant>
    <organismsDiffer>false</organismsDiffer>
    <experiments>3</experiments>
</comment>
<comment type="interaction">
    <interactant intactId="EBI-8487781">
        <id>Q8N6F8</id>
    </interactant>
    <interactant intactId="EBI-372899">
        <id>Q13148</id>
        <label>TARDBP</label>
    </interactant>
    <organismsDiffer>false</organismsDiffer>
    <experiments>6</experiments>
</comment>
<comment type="interaction">
    <interactant intactId="EBI-8487781">
        <id>Q8N6F8</id>
    </interactant>
    <interactant intactId="EBI-2824328">
        <id>O95947</id>
        <label>TBX6</label>
    </interactant>
    <organismsDiffer>false</organismsDiffer>
    <experiments>3</experiments>
</comment>
<comment type="interaction">
    <interactant intactId="EBI-8487781">
        <id>Q8N6F8</id>
    </interactant>
    <interactant intactId="EBI-8644516">
        <id>Q9BXF9</id>
        <label>TEKT3</label>
    </interactant>
    <organismsDiffer>false</organismsDiffer>
    <experiments>3</experiments>
</comment>
<comment type="interaction">
    <interactant intactId="EBI-8487781">
        <id>Q8N6F8</id>
    </interactant>
    <interactant intactId="EBI-357061">
        <id>Q92734</id>
        <label>TFG</label>
    </interactant>
    <organismsDiffer>false</organismsDiffer>
    <experiments>3</experiments>
</comment>
<comment type="interaction">
    <interactant intactId="EBI-8487781">
        <id>Q8N6F8</id>
    </interactant>
    <interactant intactId="EBI-3939165">
        <id>O43711</id>
        <label>TLX3</label>
    </interactant>
    <organismsDiffer>false</organismsDiffer>
    <experiments>3</experiments>
</comment>
<comment type="interaction">
    <interactant intactId="EBI-8487781">
        <id>Q8N6F8</id>
    </interactant>
    <interactant intactId="EBI-711909">
        <id>P02766</id>
        <label>TTR</label>
    </interactant>
    <organismsDiffer>false</organismsDiffer>
    <experiments>3</experiments>
</comment>
<comment type="interaction">
    <interactant intactId="EBI-8487781">
        <id>Q8N6F8</id>
    </interactant>
    <interactant intactId="EBI-2559305">
        <id>A5D8V6</id>
        <label>VPS37C</label>
    </interactant>
    <organismsDiffer>false</organismsDiffer>
    <experiments>3</experiments>
</comment>
<comment type="interaction">
    <interactant intactId="EBI-8487781">
        <id>Q8N6F8</id>
    </interactant>
    <interactant intactId="EBI-720609">
        <id>O76024</id>
        <label>WFS1</label>
    </interactant>
    <organismsDiffer>false</organismsDiffer>
    <experiments>3</experiments>
</comment>
<comment type="interaction">
    <interactant intactId="EBI-8487781">
        <id>Q8N6F8</id>
    </interactant>
    <interactant intactId="EBI-11963196">
        <id>Q15915</id>
        <label>ZIC1</label>
    </interactant>
    <organismsDiffer>false</organismsDiffer>
    <experiments>3</experiments>
</comment>
<comment type="interaction">
    <interactant intactId="EBI-8487781">
        <id>Q8N6F8</id>
    </interactant>
    <interactant intactId="EBI-12840750">
        <id>Q15935</id>
        <label>ZNF77</label>
    </interactant>
    <organismsDiffer>false</organismsDiffer>
    <experiments>3</experiments>
</comment>
<comment type="disease">
    <text evidence="3">METTL27 is located in the Williams-Beuren syndrome (WBS) critical region. WBS results from a hemizygous deletion of several genes on chromosome 7q11.23, thought to arise as a consequence of unequal crossing over between highly homologous low-copy repeat sequences flanking the deleted region. Haploinsufficiency of METTL27 may be the cause of certain cardiovascular and musculo-skeletal abnormalities observed in the disease.</text>
</comment>
<feature type="chain" id="PRO_0000223961" description="Methyltransferase-like protein 27">
    <location>
        <begin position="1"/>
        <end position="245"/>
    </location>
</feature>
<feature type="sequence variant" id="VAR_060385" description="In dbSNP:rs13241921." evidence="1 2 3">
    <original>Q</original>
    <variation>R</variation>
    <location>
        <position position="107"/>
    </location>
</feature>
<feature type="sequence variant" id="VAR_060386" description="In dbSNP:rs13232463." evidence="1 2 3">
    <original>S</original>
    <variation>W</variation>
    <location>
        <position position="171"/>
    </location>
</feature>
<feature type="sequence conflict" description="In Ref. 1; AAN63884, 2; AAQ55828 and 4; AAH30295." evidence="4" ref="1 2 4">
    <original>R</original>
    <variation>W</variation>
    <location>
        <position position="216"/>
    </location>
</feature>
<dbReference type="EMBL" id="AF534110">
    <property type="protein sequence ID" value="AAN63884.1"/>
    <property type="molecule type" value="mRNA"/>
</dbReference>
<dbReference type="EMBL" id="AY354928">
    <property type="protein sequence ID" value="AAQ55828.1"/>
    <property type="molecule type" value="mRNA"/>
</dbReference>
<dbReference type="EMBL" id="AC093168">
    <property type="status" value="NOT_ANNOTATED_CDS"/>
    <property type="molecule type" value="Genomic_DNA"/>
</dbReference>
<dbReference type="EMBL" id="BC030295">
    <property type="protein sequence ID" value="AAH30295.1"/>
    <property type="molecule type" value="mRNA"/>
</dbReference>
<dbReference type="CCDS" id="CCDS5561.1"/>
<dbReference type="RefSeq" id="NP_689772.2">
    <property type="nucleotide sequence ID" value="NM_152559.2"/>
</dbReference>
<dbReference type="SMR" id="Q8N6F8"/>
<dbReference type="BioGRID" id="127581">
    <property type="interactions" value="54"/>
</dbReference>
<dbReference type="FunCoup" id="Q8N6F8">
    <property type="interactions" value="21"/>
</dbReference>
<dbReference type="IntAct" id="Q8N6F8">
    <property type="interactions" value="57"/>
</dbReference>
<dbReference type="MINT" id="Q8N6F8"/>
<dbReference type="STRING" id="9606.ENSP00000297873"/>
<dbReference type="iPTMnet" id="Q8N6F8"/>
<dbReference type="PhosphoSitePlus" id="Q8N6F8"/>
<dbReference type="BioMuta" id="METTL27"/>
<dbReference type="DMDM" id="296453033"/>
<dbReference type="jPOST" id="Q8N6F8"/>
<dbReference type="MassIVE" id="Q8N6F8"/>
<dbReference type="PaxDb" id="9606-ENSP00000297873"/>
<dbReference type="PeptideAtlas" id="Q8N6F8"/>
<dbReference type="ProteomicsDB" id="72165"/>
<dbReference type="Antibodypedia" id="14461">
    <property type="antibodies" value="77 antibodies from 22 providers"/>
</dbReference>
<dbReference type="DNASU" id="155368"/>
<dbReference type="Ensembl" id="ENST00000297873.9">
    <property type="protein sequence ID" value="ENSP00000297873.4"/>
    <property type="gene ID" value="ENSG00000165171.11"/>
</dbReference>
<dbReference type="GeneID" id="155368"/>
<dbReference type="KEGG" id="hsa:155368"/>
<dbReference type="MANE-Select" id="ENST00000297873.9">
    <property type="protein sequence ID" value="ENSP00000297873.4"/>
    <property type="RefSeq nucleotide sequence ID" value="NM_152559.3"/>
    <property type="RefSeq protein sequence ID" value="NP_689772.2"/>
</dbReference>
<dbReference type="UCSC" id="uc003tzj.3">
    <property type="organism name" value="human"/>
</dbReference>
<dbReference type="AGR" id="HGNC:19068"/>
<dbReference type="CTD" id="155368"/>
<dbReference type="DisGeNET" id="155368"/>
<dbReference type="GeneCards" id="METTL27"/>
<dbReference type="HGNC" id="HGNC:19068">
    <property type="gene designation" value="METTL27"/>
</dbReference>
<dbReference type="HPA" id="ENSG00000165171">
    <property type="expression patterns" value="Tissue enhanced (choroid)"/>
</dbReference>
<dbReference type="MalaCards" id="METTL27"/>
<dbReference type="MIM" id="612546">
    <property type="type" value="gene"/>
</dbReference>
<dbReference type="neXtProt" id="NX_Q8N6F8"/>
<dbReference type="OpenTargets" id="ENSG00000165171"/>
<dbReference type="Orphanet" id="904">
    <property type="disease" value="Williams syndrome"/>
</dbReference>
<dbReference type="PharmGKB" id="PA134905115"/>
<dbReference type="VEuPathDB" id="HostDB:ENSG00000165171"/>
<dbReference type="eggNOG" id="KOG1541">
    <property type="taxonomic scope" value="Eukaryota"/>
</dbReference>
<dbReference type="GeneTree" id="ENSGT00530000063975"/>
<dbReference type="HOGENOM" id="CLU_090201_4_0_1"/>
<dbReference type="InParanoid" id="Q8N6F8"/>
<dbReference type="OMA" id="ICVGTMT"/>
<dbReference type="OrthoDB" id="3647at2759"/>
<dbReference type="PAN-GO" id="Q8N6F8">
    <property type="GO annotations" value="1 GO annotation based on evolutionary models"/>
</dbReference>
<dbReference type="PhylomeDB" id="Q8N6F8"/>
<dbReference type="TreeFam" id="TF329435"/>
<dbReference type="PathwayCommons" id="Q8N6F8"/>
<dbReference type="SignaLink" id="Q8N6F8"/>
<dbReference type="BioGRID-ORCS" id="155368">
    <property type="hits" value="13 hits in 1143 CRISPR screens"/>
</dbReference>
<dbReference type="GenomeRNAi" id="155368"/>
<dbReference type="Pharos" id="Q8N6F8">
    <property type="development level" value="Tdark"/>
</dbReference>
<dbReference type="PRO" id="PR:Q8N6F8"/>
<dbReference type="Proteomes" id="UP000005640">
    <property type="component" value="Chromosome 7"/>
</dbReference>
<dbReference type="RNAct" id="Q8N6F8">
    <property type="molecule type" value="protein"/>
</dbReference>
<dbReference type="Bgee" id="ENSG00000165171">
    <property type="expression patterns" value="Expressed in right uterine tube and 91 other cell types or tissues"/>
</dbReference>
<dbReference type="ExpressionAtlas" id="Q8N6F8">
    <property type="expression patterns" value="baseline and differential"/>
</dbReference>
<dbReference type="CDD" id="cd02440">
    <property type="entry name" value="AdoMet_MTases"/>
    <property type="match status" value="1"/>
</dbReference>
<dbReference type="Gene3D" id="3.40.50.150">
    <property type="entry name" value="Vaccinia Virus protein VP39"/>
    <property type="match status" value="1"/>
</dbReference>
<dbReference type="InterPro" id="IPR041698">
    <property type="entry name" value="Methyltransf_25"/>
</dbReference>
<dbReference type="InterPro" id="IPR029063">
    <property type="entry name" value="SAM-dependent_MTases_sf"/>
</dbReference>
<dbReference type="PANTHER" id="PTHR43591">
    <property type="entry name" value="METHYLTRANSFERASE"/>
    <property type="match status" value="1"/>
</dbReference>
<dbReference type="PANTHER" id="PTHR43591:SF101">
    <property type="entry name" value="METHYLTRANSFERASE-LIKE PROTEIN 27"/>
    <property type="match status" value="1"/>
</dbReference>
<dbReference type="Pfam" id="PF13649">
    <property type="entry name" value="Methyltransf_25"/>
    <property type="match status" value="1"/>
</dbReference>
<dbReference type="SUPFAM" id="SSF53335">
    <property type="entry name" value="S-adenosyl-L-methionine-dependent methyltransferases"/>
    <property type="match status" value="1"/>
</dbReference>
<reference key="1">
    <citation type="submission" date="2002-08" db="EMBL/GenBank/DDBJ databases">
        <title>Genes deleted in Williams-Beuren Syndrome.</title>
        <authorList>
            <person name="Tassabehji M."/>
        </authorList>
    </citation>
    <scope>NUCLEOTIDE SEQUENCE [MRNA]</scope>
    <scope>VARIANTS ARG-107 AND TRP-171</scope>
</reference>
<reference key="2">
    <citation type="journal article" date="2008" name="Eur. J. Hum. Genet.">
        <title>Williams-Beuren syndrome TRIM50 encodes an E3 ubiquitin ligase.</title>
        <authorList>
            <person name="Micale L."/>
            <person name="Fusco C."/>
            <person name="Augello B."/>
            <person name="Napolitano L.M.R."/>
            <person name="Dermitzakis E.T."/>
            <person name="Meroni G."/>
            <person name="Merla G."/>
            <person name="Reymond A."/>
        </authorList>
    </citation>
    <scope>NUCLEOTIDE SEQUENCE [MRNA]</scope>
    <scope>VARIANTS ARG-107 AND TRP-171</scope>
    <scope>POSSIBLE INVOLVEMENT IN WILLIAMS-BEUREN SYNDROME</scope>
</reference>
<reference key="3">
    <citation type="journal article" date="2003" name="Nature">
        <title>The DNA sequence of human chromosome 7.</title>
        <authorList>
            <person name="Hillier L.W."/>
            <person name="Fulton R.S."/>
            <person name="Fulton L.A."/>
            <person name="Graves T.A."/>
            <person name="Pepin K.H."/>
            <person name="Wagner-McPherson C."/>
            <person name="Layman D."/>
            <person name="Maas J."/>
            <person name="Jaeger S."/>
            <person name="Walker R."/>
            <person name="Wylie K."/>
            <person name="Sekhon M."/>
            <person name="Becker M.C."/>
            <person name="O'Laughlin M.D."/>
            <person name="Schaller M.E."/>
            <person name="Fewell G.A."/>
            <person name="Delehaunty K.D."/>
            <person name="Miner T.L."/>
            <person name="Nash W.E."/>
            <person name="Cordes M."/>
            <person name="Du H."/>
            <person name="Sun H."/>
            <person name="Edwards J."/>
            <person name="Bradshaw-Cordum H."/>
            <person name="Ali J."/>
            <person name="Andrews S."/>
            <person name="Isak A."/>
            <person name="Vanbrunt A."/>
            <person name="Nguyen C."/>
            <person name="Du F."/>
            <person name="Lamar B."/>
            <person name="Courtney L."/>
            <person name="Kalicki J."/>
            <person name="Ozersky P."/>
            <person name="Bielicki L."/>
            <person name="Scott K."/>
            <person name="Holmes A."/>
            <person name="Harkins R."/>
            <person name="Harris A."/>
            <person name="Strong C.M."/>
            <person name="Hou S."/>
            <person name="Tomlinson C."/>
            <person name="Dauphin-Kohlberg S."/>
            <person name="Kozlowicz-Reilly A."/>
            <person name="Leonard S."/>
            <person name="Rohlfing T."/>
            <person name="Rock S.M."/>
            <person name="Tin-Wollam A.-M."/>
            <person name="Abbott A."/>
            <person name="Minx P."/>
            <person name="Maupin R."/>
            <person name="Strowmatt C."/>
            <person name="Latreille P."/>
            <person name="Miller N."/>
            <person name="Johnson D."/>
            <person name="Murray J."/>
            <person name="Woessner J.P."/>
            <person name="Wendl M.C."/>
            <person name="Yang S.-P."/>
            <person name="Schultz B.R."/>
            <person name="Wallis J.W."/>
            <person name="Spieth J."/>
            <person name="Bieri T.A."/>
            <person name="Nelson J.O."/>
            <person name="Berkowicz N."/>
            <person name="Wohldmann P.E."/>
            <person name="Cook L.L."/>
            <person name="Hickenbotham M.T."/>
            <person name="Eldred J."/>
            <person name="Williams D."/>
            <person name="Bedell J.A."/>
            <person name="Mardis E.R."/>
            <person name="Clifton S.W."/>
            <person name="Chissoe S.L."/>
            <person name="Marra M.A."/>
            <person name="Raymond C."/>
            <person name="Haugen E."/>
            <person name="Gillett W."/>
            <person name="Zhou Y."/>
            <person name="James R."/>
            <person name="Phelps K."/>
            <person name="Iadanoto S."/>
            <person name="Bubb K."/>
            <person name="Simms E."/>
            <person name="Levy R."/>
            <person name="Clendenning J."/>
            <person name="Kaul R."/>
            <person name="Kent W.J."/>
            <person name="Furey T.S."/>
            <person name="Baertsch R.A."/>
            <person name="Brent M.R."/>
            <person name="Keibler E."/>
            <person name="Flicek P."/>
            <person name="Bork P."/>
            <person name="Suyama M."/>
            <person name="Bailey J.A."/>
            <person name="Portnoy M.E."/>
            <person name="Torrents D."/>
            <person name="Chinwalla A.T."/>
            <person name="Gish W.R."/>
            <person name="Eddy S.R."/>
            <person name="McPherson J.D."/>
            <person name="Olson M.V."/>
            <person name="Eichler E.E."/>
            <person name="Green E.D."/>
            <person name="Waterston R.H."/>
            <person name="Wilson R.K."/>
        </authorList>
    </citation>
    <scope>NUCLEOTIDE SEQUENCE [LARGE SCALE GENOMIC DNA]</scope>
</reference>
<reference key="4">
    <citation type="journal article" date="2004" name="Genome Res.">
        <title>The status, quality, and expansion of the NIH full-length cDNA project: the Mammalian Gene Collection (MGC).</title>
        <authorList>
            <consortium name="The MGC Project Team"/>
        </authorList>
    </citation>
    <scope>NUCLEOTIDE SEQUENCE [LARGE SCALE MRNA]</scope>
    <scope>VARIANTS ARG-107 AND TRP-171</scope>
    <source>
        <tissue>Mammary gland</tissue>
    </source>
</reference>
<accession>Q8N6F8</accession>
<protein>
    <recommendedName>
        <fullName evidence="5">Methyltransferase-like protein 27</fullName>
    </recommendedName>
    <alternativeName>
        <fullName evidence="5">Williams-Beuren syndrome chromosomal region 27 protein</fullName>
    </alternativeName>
</protein>
<sequence>MAQEEGGSLPEVRARVRAAHGIPDLAQKLHFYDRWAPDYDQDVATLLYRAPRLAVDCLTQALPGPPHSALILDVACGTGLVAAELRAPGFLQLHGVDGSPGMLEQAQAPGLYQRLSLCTLGQEPLPSPEGTFDAVLIVGALSDGQVPCNAIPELHVTKPGGLVCLTTRTNSSNLQYKEALEATLDRLEQAGMWEGLVAWPVDRLWTAGSWLPPSWRWYPASLPRMASSPALSTCTESGRRPRLRK</sequence>